<organism>
    <name type="scientific">Escherichia coli O9:H4 (strain HS)</name>
    <dbReference type="NCBI Taxonomy" id="331112"/>
    <lineage>
        <taxon>Bacteria</taxon>
        <taxon>Pseudomonadati</taxon>
        <taxon>Pseudomonadota</taxon>
        <taxon>Gammaproteobacteria</taxon>
        <taxon>Enterobacterales</taxon>
        <taxon>Enterobacteriaceae</taxon>
        <taxon>Escherichia</taxon>
    </lineage>
</organism>
<protein>
    <recommendedName>
        <fullName evidence="1">Inner membrane-spanning protein YciB</fullName>
    </recommendedName>
</protein>
<reference key="1">
    <citation type="journal article" date="2008" name="J. Bacteriol.">
        <title>The pangenome structure of Escherichia coli: comparative genomic analysis of E. coli commensal and pathogenic isolates.</title>
        <authorList>
            <person name="Rasko D.A."/>
            <person name="Rosovitz M.J."/>
            <person name="Myers G.S.A."/>
            <person name="Mongodin E.F."/>
            <person name="Fricke W.F."/>
            <person name="Gajer P."/>
            <person name="Crabtree J."/>
            <person name="Sebaihia M."/>
            <person name="Thomson N.R."/>
            <person name="Chaudhuri R."/>
            <person name="Henderson I.R."/>
            <person name="Sperandio V."/>
            <person name="Ravel J."/>
        </authorList>
    </citation>
    <scope>NUCLEOTIDE SEQUENCE [LARGE SCALE GENOMIC DNA]</scope>
    <source>
        <strain>HS</strain>
    </source>
</reference>
<gene>
    <name evidence="1" type="primary">yciB</name>
    <name type="ordered locus">EcHS_A1363</name>
</gene>
<evidence type="ECO:0000255" key="1">
    <source>
        <dbReference type="HAMAP-Rule" id="MF_00189"/>
    </source>
</evidence>
<keyword id="KW-0997">Cell inner membrane</keyword>
<keyword id="KW-1003">Cell membrane</keyword>
<keyword id="KW-0472">Membrane</keyword>
<keyword id="KW-0812">Transmembrane</keyword>
<keyword id="KW-1133">Transmembrane helix</keyword>
<proteinExistence type="inferred from homology"/>
<feature type="chain" id="PRO_1000058472" description="Inner membrane-spanning protein YciB">
    <location>
        <begin position="1"/>
        <end position="179"/>
    </location>
</feature>
<feature type="transmembrane region" description="Helical" evidence="1">
    <location>
        <begin position="22"/>
        <end position="42"/>
    </location>
</feature>
<feature type="transmembrane region" description="Helical" evidence="1">
    <location>
        <begin position="50"/>
        <end position="70"/>
    </location>
</feature>
<feature type="transmembrane region" description="Helical" evidence="1">
    <location>
        <begin position="76"/>
        <end position="96"/>
    </location>
</feature>
<feature type="transmembrane region" description="Helical" evidence="1">
    <location>
        <begin position="121"/>
        <end position="141"/>
    </location>
</feature>
<feature type="transmembrane region" description="Helical" evidence="1">
    <location>
        <begin position="149"/>
        <end position="169"/>
    </location>
</feature>
<sequence length="179" mass="20790">MKQFLDFLPLVVFFAFYKIYDIYAATAALIVATAIVLIYSWVRFRKVEKMALITFVLVVVFGGLTLFFHNDEFIKWKVTVIYALFAGALLVSQWVMKKPLIQRMLGKELTLPQPVWSKLNLAWAVFFILCGLANIYIAFWLPQNIWVNFKVFGLTALTLIFTLLSGIYIYRHMPQEDKS</sequence>
<comment type="function">
    <text evidence="1">Plays a role in cell envelope biogenesis, maintenance of cell envelope integrity and membrane homeostasis.</text>
</comment>
<comment type="subcellular location">
    <subcellularLocation>
        <location evidence="1">Cell inner membrane</location>
        <topology evidence="1">Multi-pass membrane protein</topology>
    </subcellularLocation>
</comment>
<comment type="similarity">
    <text evidence="1">Belongs to the YciB family.</text>
</comment>
<accession>A7ZZJ0</accession>
<name>YCIB_ECOHS</name>
<dbReference type="EMBL" id="CP000802">
    <property type="protein sequence ID" value="ABV05694.1"/>
    <property type="molecule type" value="Genomic_DNA"/>
</dbReference>
<dbReference type="RefSeq" id="WP_000808667.1">
    <property type="nucleotide sequence ID" value="NC_009800.1"/>
</dbReference>
<dbReference type="KEGG" id="ecx:EcHS_A1363"/>
<dbReference type="HOGENOM" id="CLU_089554_2_0_6"/>
<dbReference type="GO" id="GO:0005886">
    <property type="term" value="C:plasma membrane"/>
    <property type="evidence" value="ECO:0007669"/>
    <property type="project" value="UniProtKB-SubCell"/>
</dbReference>
<dbReference type="HAMAP" id="MF_00189">
    <property type="entry name" value="YciB"/>
    <property type="match status" value="1"/>
</dbReference>
<dbReference type="InterPro" id="IPR006008">
    <property type="entry name" value="YciB"/>
</dbReference>
<dbReference type="NCBIfam" id="TIGR00997">
    <property type="entry name" value="ispZ"/>
    <property type="match status" value="1"/>
</dbReference>
<dbReference type="NCBIfam" id="NF001324">
    <property type="entry name" value="PRK00259.1-2"/>
    <property type="match status" value="1"/>
</dbReference>
<dbReference type="NCBIfam" id="NF001325">
    <property type="entry name" value="PRK00259.1-3"/>
    <property type="match status" value="1"/>
</dbReference>
<dbReference type="NCBIfam" id="NF001326">
    <property type="entry name" value="PRK00259.1-4"/>
    <property type="match status" value="1"/>
</dbReference>
<dbReference type="PANTHER" id="PTHR36917:SF1">
    <property type="entry name" value="INNER MEMBRANE-SPANNING PROTEIN YCIB"/>
    <property type="match status" value="1"/>
</dbReference>
<dbReference type="PANTHER" id="PTHR36917">
    <property type="entry name" value="INTRACELLULAR SEPTATION PROTEIN A-RELATED"/>
    <property type="match status" value="1"/>
</dbReference>
<dbReference type="Pfam" id="PF04279">
    <property type="entry name" value="IspA"/>
    <property type="match status" value="1"/>
</dbReference>